<proteinExistence type="evidence at protein level"/>
<organism>
    <name type="scientific">Dictyostelium discoideum</name>
    <name type="common">Social amoeba</name>
    <dbReference type="NCBI Taxonomy" id="44689"/>
    <lineage>
        <taxon>Eukaryota</taxon>
        <taxon>Amoebozoa</taxon>
        <taxon>Evosea</taxon>
        <taxon>Eumycetozoa</taxon>
        <taxon>Dictyostelia</taxon>
        <taxon>Dictyosteliales</taxon>
        <taxon>Dictyosteliaceae</taxon>
        <taxon>Dictyostelium</taxon>
    </lineage>
</organism>
<comment type="function">
    <text evidence="1">Heme-dependent dioxygenase that catalyzes the oxidative cleavage of the L-tryptophan (L-Trp) pyrrole ring and converts L-tryptophan to N-formyl-L-kynurenine. Catalyzes the oxidative cleavage of the indole moiety.</text>
</comment>
<comment type="catalytic activity">
    <reaction evidence="1">
        <text>L-tryptophan + O2 = N-formyl-L-kynurenine</text>
        <dbReference type="Rhea" id="RHEA:24536"/>
        <dbReference type="ChEBI" id="CHEBI:15379"/>
        <dbReference type="ChEBI" id="CHEBI:57912"/>
        <dbReference type="ChEBI" id="CHEBI:58629"/>
        <dbReference type="EC" id="1.13.11.11"/>
    </reaction>
</comment>
<comment type="cofactor">
    <cofactor evidence="1">
        <name>heme</name>
        <dbReference type="ChEBI" id="CHEBI:30413"/>
    </cofactor>
    <text evidence="1">Binds 1 heme group per subunit.</text>
</comment>
<comment type="pathway">
    <text evidence="1">Amino-acid degradation; L-tryptophan degradation via kynurenine pathway; L-kynurenine from L-tryptophan: step 1/2.</text>
</comment>
<comment type="subunit">
    <text evidence="1">Homotetramer. Dimer of dimers.</text>
</comment>
<comment type="similarity">
    <text evidence="1">Belongs to the tryptophan 2,3-dioxygenase family.</text>
</comment>
<sequence>MSGCQFNQPYCPRSEEKKSIAESIEKATLMEPSIDAQSAQKGVYYGSYLKLDELLNIQECESVKVGAPAHEEMLFIIIHQTYELWFKQMIHEIDSIRSIMSTPPTPERLNGVIVNRLGRITEIQKLLVDQISILETMTSVDFLEFRNLLVPASGFQSVQFRMIENKLGILPNTRVQYQQHHYHSFFNEKDRKALQATENEVSLLQLVIQWLERNPFLYYKGYDFWSSYKSAVDQILENDLQRIQANNDLSQDMKDQSTKEAKKNMESFSTLFDEVAYNERLEKGEVRLSYKALQSAILIYLYKDEPIFHTPFLILNLLTEIDELLTMWRFRHTMMVQRIIGAKIGTGGSSGYHYLRTTVGDRYKIFLDLFNISSYLIPKNTLPQLPKVVKEQMDFAWSIL</sequence>
<keyword id="KW-0223">Dioxygenase</keyword>
<keyword id="KW-0903">Direct protein sequencing</keyword>
<keyword id="KW-0349">Heme</keyword>
<keyword id="KW-0408">Iron</keyword>
<keyword id="KW-0479">Metal-binding</keyword>
<keyword id="KW-0560">Oxidoreductase</keyword>
<keyword id="KW-1185">Reference proteome</keyword>
<keyword id="KW-0823">Tryptophan catabolism</keyword>
<protein>
    <recommendedName>
        <fullName evidence="1">Tryptophan 2,3-dioxygenase</fullName>
        <shortName evidence="1">TDO</shortName>
        <ecNumber evidence="1">1.13.11.11</ecNumber>
    </recommendedName>
    <alternativeName>
        <fullName evidence="1">Tryptamin 2,3-dioxygenase</fullName>
    </alternativeName>
    <alternativeName>
        <fullName evidence="1">Tryptophan oxygenase</fullName>
        <shortName evidence="1">TO</shortName>
        <shortName evidence="1">TRPO</shortName>
    </alternativeName>
    <alternativeName>
        <fullName evidence="1">Tryptophan pyrrolase</fullName>
    </alternativeName>
    <alternativeName>
        <fullName evidence="1">Tryptophanase</fullName>
    </alternativeName>
</protein>
<gene>
    <name evidence="1" type="primary">tdo</name>
    <name type="ORF">DDB_G0269714</name>
</gene>
<evidence type="ECO:0000255" key="1">
    <source>
        <dbReference type="HAMAP-Rule" id="MF_03020"/>
    </source>
</evidence>
<feature type="chain" id="PRO_0000327794" description="Tryptophan 2,3-dioxygenase">
    <location>
        <begin position="1"/>
        <end position="400"/>
    </location>
</feature>
<feature type="binding site" evidence="1">
    <location>
        <begin position="75"/>
        <end position="79"/>
    </location>
    <ligand>
        <name>substrate</name>
    </ligand>
</feature>
<feature type="binding site" evidence="1">
    <location>
        <position position="146"/>
    </location>
    <ligand>
        <name>substrate</name>
    </ligand>
</feature>
<feature type="binding site" description="axial binding residue" evidence="1">
    <location>
        <position position="332"/>
    </location>
    <ligand>
        <name>heme</name>
        <dbReference type="ChEBI" id="CHEBI:30413"/>
    </ligand>
    <ligandPart>
        <name>Fe</name>
        <dbReference type="ChEBI" id="CHEBI:18248"/>
    </ligandPart>
</feature>
<feature type="binding site" evidence="1">
    <location>
        <position position="346"/>
    </location>
    <ligand>
        <name>substrate</name>
    </ligand>
</feature>
<accession>Q55DB4</accession>
<dbReference type="EC" id="1.13.11.11" evidence="1"/>
<dbReference type="EMBL" id="AAFI02000005">
    <property type="protein sequence ID" value="EAL72207.1"/>
    <property type="molecule type" value="Genomic_DNA"/>
</dbReference>
<dbReference type="RefSeq" id="XP_646217.1">
    <property type="nucleotide sequence ID" value="XM_641125.1"/>
</dbReference>
<dbReference type="SMR" id="Q55DB4"/>
<dbReference type="FunCoup" id="Q55DB4">
    <property type="interactions" value="86"/>
</dbReference>
<dbReference type="STRING" id="44689.Q55DB4"/>
<dbReference type="GlyGen" id="Q55DB4">
    <property type="glycosylation" value="1 site"/>
</dbReference>
<dbReference type="PaxDb" id="44689-DDB0231363"/>
<dbReference type="EnsemblProtists" id="EAL72207">
    <property type="protein sequence ID" value="EAL72207"/>
    <property type="gene ID" value="DDB_G0269714"/>
</dbReference>
<dbReference type="GeneID" id="8617171"/>
<dbReference type="KEGG" id="ddi:DDB_G0269714"/>
<dbReference type="dictyBase" id="DDB_G0269714">
    <property type="gene designation" value="tdo"/>
</dbReference>
<dbReference type="VEuPathDB" id="AmoebaDB:DDB_G0269714"/>
<dbReference type="eggNOG" id="KOG3906">
    <property type="taxonomic scope" value="Eukaryota"/>
</dbReference>
<dbReference type="HOGENOM" id="CLU_045599_1_1_1"/>
<dbReference type="InParanoid" id="Q55DB4"/>
<dbReference type="OMA" id="FITIHQT"/>
<dbReference type="PhylomeDB" id="Q55DB4"/>
<dbReference type="Reactome" id="R-DDI-71240">
    <property type="pathway name" value="Tryptophan catabolism"/>
</dbReference>
<dbReference type="UniPathway" id="UPA00333">
    <property type="reaction ID" value="UER00453"/>
</dbReference>
<dbReference type="PRO" id="PR:Q55DB4"/>
<dbReference type="Proteomes" id="UP000002195">
    <property type="component" value="Chromosome 1"/>
</dbReference>
<dbReference type="GO" id="GO:0020037">
    <property type="term" value="F:heme binding"/>
    <property type="evidence" value="ECO:0000318"/>
    <property type="project" value="GO_Central"/>
</dbReference>
<dbReference type="GO" id="GO:0046872">
    <property type="term" value="F:metal ion binding"/>
    <property type="evidence" value="ECO:0007669"/>
    <property type="project" value="UniProtKB-KW"/>
</dbReference>
<dbReference type="GO" id="GO:0004833">
    <property type="term" value="F:tryptophan 2,3-dioxygenase activity"/>
    <property type="evidence" value="ECO:0000318"/>
    <property type="project" value="GO_Central"/>
</dbReference>
<dbReference type="GO" id="GO:0019442">
    <property type="term" value="P:L-tryptophan catabolic process to acetyl-CoA"/>
    <property type="evidence" value="ECO:0000318"/>
    <property type="project" value="GO_Central"/>
</dbReference>
<dbReference type="GO" id="GO:0019441">
    <property type="term" value="P:L-tryptophan catabolic process to kynurenine"/>
    <property type="evidence" value="ECO:0007669"/>
    <property type="project" value="UniProtKB-UniRule"/>
</dbReference>
<dbReference type="FunFam" id="1.10.287.3810:FF:000001">
    <property type="entry name" value="Tryptophan 2,3-dioxygenase"/>
    <property type="match status" value="1"/>
</dbReference>
<dbReference type="Gene3D" id="1.10.287.3810">
    <property type="match status" value="1"/>
</dbReference>
<dbReference type="Gene3D" id="1.20.58.480">
    <property type="match status" value="1"/>
</dbReference>
<dbReference type="HAMAP" id="MF_01972">
    <property type="entry name" value="T23O"/>
    <property type="match status" value="1"/>
</dbReference>
<dbReference type="InterPro" id="IPR037217">
    <property type="entry name" value="Trp/Indoleamine_2_3_dOase-like"/>
</dbReference>
<dbReference type="InterPro" id="IPR004981">
    <property type="entry name" value="Trp_2_3_dOase"/>
</dbReference>
<dbReference type="PANTHER" id="PTHR10138">
    <property type="entry name" value="TRYPTOPHAN 2,3-DIOXYGENASE"/>
    <property type="match status" value="1"/>
</dbReference>
<dbReference type="PANTHER" id="PTHR10138:SF0">
    <property type="entry name" value="TRYPTOPHAN 2,3-DIOXYGENASE"/>
    <property type="match status" value="1"/>
</dbReference>
<dbReference type="Pfam" id="PF03301">
    <property type="entry name" value="Trp_dioxygenase"/>
    <property type="match status" value="1"/>
</dbReference>
<dbReference type="SUPFAM" id="SSF140959">
    <property type="entry name" value="Indolic compounds 2,3-dioxygenase-like"/>
    <property type="match status" value="1"/>
</dbReference>
<reference key="1">
    <citation type="journal article" date="2005" name="Nature">
        <title>The genome of the social amoeba Dictyostelium discoideum.</title>
        <authorList>
            <person name="Eichinger L."/>
            <person name="Pachebat J.A."/>
            <person name="Gloeckner G."/>
            <person name="Rajandream M.A."/>
            <person name="Sucgang R."/>
            <person name="Berriman M."/>
            <person name="Song J."/>
            <person name="Olsen R."/>
            <person name="Szafranski K."/>
            <person name="Xu Q."/>
            <person name="Tunggal B."/>
            <person name="Kummerfeld S."/>
            <person name="Madera M."/>
            <person name="Konfortov B.A."/>
            <person name="Rivero F."/>
            <person name="Bankier A.T."/>
            <person name="Lehmann R."/>
            <person name="Hamlin N."/>
            <person name="Davies R."/>
            <person name="Gaudet P."/>
            <person name="Fey P."/>
            <person name="Pilcher K."/>
            <person name="Chen G."/>
            <person name="Saunders D."/>
            <person name="Sodergren E.J."/>
            <person name="Davis P."/>
            <person name="Kerhornou A."/>
            <person name="Nie X."/>
            <person name="Hall N."/>
            <person name="Anjard C."/>
            <person name="Hemphill L."/>
            <person name="Bason N."/>
            <person name="Farbrother P."/>
            <person name="Desany B."/>
            <person name="Just E."/>
            <person name="Morio T."/>
            <person name="Rost R."/>
            <person name="Churcher C.M."/>
            <person name="Cooper J."/>
            <person name="Haydock S."/>
            <person name="van Driessche N."/>
            <person name="Cronin A."/>
            <person name="Goodhead I."/>
            <person name="Muzny D.M."/>
            <person name="Mourier T."/>
            <person name="Pain A."/>
            <person name="Lu M."/>
            <person name="Harper D."/>
            <person name="Lindsay R."/>
            <person name="Hauser H."/>
            <person name="James K.D."/>
            <person name="Quiles M."/>
            <person name="Madan Babu M."/>
            <person name="Saito T."/>
            <person name="Buchrieser C."/>
            <person name="Wardroper A."/>
            <person name="Felder M."/>
            <person name="Thangavelu M."/>
            <person name="Johnson D."/>
            <person name="Knights A."/>
            <person name="Loulseged H."/>
            <person name="Mungall K.L."/>
            <person name="Oliver K."/>
            <person name="Price C."/>
            <person name="Quail M.A."/>
            <person name="Urushihara H."/>
            <person name="Hernandez J."/>
            <person name="Rabbinowitsch E."/>
            <person name="Steffen D."/>
            <person name="Sanders M."/>
            <person name="Ma J."/>
            <person name="Kohara Y."/>
            <person name="Sharp S."/>
            <person name="Simmonds M.N."/>
            <person name="Spiegler S."/>
            <person name="Tivey A."/>
            <person name="Sugano S."/>
            <person name="White B."/>
            <person name="Walker D."/>
            <person name="Woodward J.R."/>
            <person name="Winckler T."/>
            <person name="Tanaka Y."/>
            <person name="Shaulsky G."/>
            <person name="Schleicher M."/>
            <person name="Weinstock G.M."/>
            <person name="Rosenthal A."/>
            <person name="Cox E.C."/>
            <person name="Chisholm R.L."/>
            <person name="Gibbs R.A."/>
            <person name="Loomis W.F."/>
            <person name="Platzer M."/>
            <person name="Kay R.R."/>
            <person name="Williams J.G."/>
            <person name="Dear P.H."/>
            <person name="Noegel A.A."/>
            <person name="Barrell B.G."/>
            <person name="Kuspa A."/>
        </authorList>
    </citation>
    <scope>NUCLEOTIDE SEQUENCE [LARGE SCALE GENOMIC DNA]</scope>
    <source>
        <strain>AX4</strain>
    </source>
</reference>
<reference key="2">
    <citation type="submission" date="2009-07" db="UniProtKB">
        <authorList>
            <person name="Bienvenut W.V."/>
            <person name="Ura S."/>
            <person name="Insall R.H."/>
        </authorList>
    </citation>
    <scope>PROTEIN SEQUENCE OF 27-50; 88-116; 147-161; 167-174; 221-242; 344-356 AND 380-387</scope>
    <scope>IDENTIFICATION BY MASS SPECTROMETRY</scope>
    <source>
        <strain>AX2</strain>
    </source>
</reference>
<name>T23O_DICDI</name>